<gene>
    <name type="primary">csbD</name>
    <name type="synonym">ywmG</name>
    <name type="ordered locus">BSU36670</name>
</gene>
<proteinExistence type="evidence at protein level"/>
<comment type="induction">
    <text evidence="2">By phosphate starvation, via the alternative sigma factor sigma-B.</text>
</comment>
<comment type="similarity">
    <text evidence="3">Belongs to the UPF0337 (CsbD) family.</text>
</comment>
<reference key="1">
    <citation type="submission" date="1996-10" db="EMBL/GenBank/DDBJ databases">
        <title>Bacillus subtilis atpC to ureA chromosomal region.</title>
        <authorList>
            <person name="Glaser P."/>
            <person name="Danchin A."/>
            <person name="Kunst F."/>
            <person name="Moszer I."/>
        </authorList>
    </citation>
    <scope>NUCLEOTIDE SEQUENCE [GENOMIC DNA]</scope>
    <source>
        <strain>168</strain>
    </source>
</reference>
<reference key="2">
    <citation type="journal article" date="1997" name="Nature">
        <title>The complete genome sequence of the Gram-positive bacterium Bacillus subtilis.</title>
        <authorList>
            <person name="Kunst F."/>
            <person name="Ogasawara N."/>
            <person name="Moszer I."/>
            <person name="Albertini A.M."/>
            <person name="Alloni G."/>
            <person name="Azevedo V."/>
            <person name="Bertero M.G."/>
            <person name="Bessieres P."/>
            <person name="Bolotin A."/>
            <person name="Borchert S."/>
            <person name="Borriss R."/>
            <person name="Boursier L."/>
            <person name="Brans A."/>
            <person name="Braun M."/>
            <person name="Brignell S.C."/>
            <person name="Bron S."/>
            <person name="Brouillet S."/>
            <person name="Bruschi C.V."/>
            <person name="Caldwell B."/>
            <person name="Capuano V."/>
            <person name="Carter N.M."/>
            <person name="Choi S.-K."/>
            <person name="Codani J.-J."/>
            <person name="Connerton I.F."/>
            <person name="Cummings N.J."/>
            <person name="Daniel R.A."/>
            <person name="Denizot F."/>
            <person name="Devine K.M."/>
            <person name="Duesterhoeft A."/>
            <person name="Ehrlich S.D."/>
            <person name="Emmerson P.T."/>
            <person name="Entian K.-D."/>
            <person name="Errington J."/>
            <person name="Fabret C."/>
            <person name="Ferrari E."/>
            <person name="Foulger D."/>
            <person name="Fritz C."/>
            <person name="Fujita M."/>
            <person name="Fujita Y."/>
            <person name="Fuma S."/>
            <person name="Galizzi A."/>
            <person name="Galleron N."/>
            <person name="Ghim S.-Y."/>
            <person name="Glaser P."/>
            <person name="Goffeau A."/>
            <person name="Golightly E.J."/>
            <person name="Grandi G."/>
            <person name="Guiseppi G."/>
            <person name="Guy B.J."/>
            <person name="Haga K."/>
            <person name="Haiech J."/>
            <person name="Harwood C.R."/>
            <person name="Henaut A."/>
            <person name="Hilbert H."/>
            <person name="Holsappel S."/>
            <person name="Hosono S."/>
            <person name="Hullo M.-F."/>
            <person name="Itaya M."/>
            <person name="Jones L.-M."/>
            <person name="Joris B."/>
            <person name="Karamata D."/>
            <person name="Kasahara Y."/>
            <person name="Klaerr-Blanchard M."/>
            <person name="Klein C."/>
            <person name="Kobayashi Y."/>
            <person name="Koetter P."/>
            <person name="Koningstein G."/>
            <person name="Krogh S."/>
            <person name="Kumano M."/>
            <person name="Kurita K."/>
            <person name="Lapidus A."/>
            <person name="Lardinois S."/>
            <person name="Lauber J."/>
            <person name="Lazarevic V."/>
            <person name="Lee S.-M."/>
            <person name="Levine A."/>
            <person name="Liu H."/>
            <person name="Masuda S."/>
            <person name="Mauel C."/>
            <person name="Medigue C."/>
            <person name="Medina N."/>
            <person name="Mellado R.P."/>
            <person name="Mizuno M."/>
            <person name="Moestl D."/>
            <person name="Nakai S."/>
            <person name="Noback M."/>
            <person name="Noone D."/>
            <person name="O'Reilly M."/>
            <person name="Ogawa K."/>
            <person name="Ogiwara A."/>
            <person name="Oudega B."/>
            <person name="Park S.-H."/>
            <person name="Parro V."/>
            <person name="Pohl T.M."/>
            <person name="Portetelle D."/>
            <person name="Porwollik S."/>
            <person name="Prescott A.M."/>
            <person name="Presecan E."/>
            <person name="Pujic P."/>
            <person name="Purnelle B."/>
            <person name="Rapoport G."/>
            <person name="Rey M."/>
            <person name="Reynolds S."/>
            <person name="Rieger M."/>
            <person name="Rivolta C."/>
            <person name="Rocha E."/>
            <person name="Roche B."/>
            <person name="Rose M."/>
            <person name="Sadaie Y."/>
            <person name="Sato T."/>
            <person name="Scanlan E."/>
            <person name="Schleich S."/>
            <person name="Schroeter R."/>
            <person name="Scoffone F."/>
            <person name="Sekiguchi J."/>
            <person name="Sekowska A."/>
            <person name="Seror S.J."/>
            <person name="Serror P."/>
            <person name="Shin B.-S."/>
            <person name="Soldo B."/>
            <person name="Sorokin A."/>
            <person name="Tacconi E."/>
            <person name="Takagi T."/>
            <person name="Takahashi H."/>
            <person name="Takemaru K."/>
            <person name="Takeuchi M."/>
            <person name="Tamakoshi A."/>
            <person name="Tanaka T."/>
            <person name="Terpstra P."/>
            <person name="Tognoni A."/>
            <person name="Tosato V."/>
            <person name="Uchiyama S."/>
            <person name="Vandenbol M."/>
            <person name="Vannier F."/>
            <person name="Vassarotti A."/>
            <person name="Viari A."/>
            <person name="Wambutt R."/>
            <person name="Wedler E."/>
            <person name="Wedler H."/>
            <person name="Weitzenegger T."/>
            <person name="Winters P."/>
            <person name="Wipat A."/>
            <person name="Yamamoto H."/>
            <person name="Yamane K."/>
            <person name="Yasumoto K."/>
            <person name="Yata K."/>
            <person name="Yoshida K."/>
            <person name="Yoshikawa H.-F."/>
            <person name="Zumstein E."/>
            <person name="Yoshikawa H."/>
            <person name="Danchin A."/>
        </authorList>
    </citation>
    <scope>NUCLEOTIDE SEQUENCE [LARGE SCALE GENOMIC DNA]</scope>
    <source>
        <strain>168</strain>
    </source>
</reference>
<reference key="3">
    <citation type="journal article" date="1999" name="Microbiology">
        <title>Two genes from Bacillus subtilis under the sole control of the general stress transcription factor sigmaB.</title>
        <authorList>
            <person name="Akbar S."/>
            <person name="Lee S.Y."/>
            <person name="Boylan S.A."/>
            <person name="Price C.W."/>
        </authorList>
    </citation>
    <scope>CHARACTERIZATION</scope>
</reference>
<reference key="4">
    <citation type="journal article" date="2002" name="Microbiology">
        <title>Regulatory interactions between the Pho and sigma(B)-dependent general stress regulons of Bacillus subtilis.</title>
        <authorList>
            <person name="Pragai Z."/>
            <person name="Harwood C.R."/>
        </authorList>
    </citation>
    <scope>TRANSCRIPTIONAL REGULATION</scope>
</reference>
<protein>
    <recommendedName>
        <fullName>Stress response protein CsbD</fullName>
    </recommendedName>
</protein>
<organism>
    <name type="scientific">Bacillus subtilis (strain 168)</name>
    <dbReference type="NCBI Taxonomy" id="224308"/>
    <lineage>
        <taxon>Bacteria</taxon>
        <taxon>Bacillati</taxon>
        <taxon>Bacillota</taxon>
        <taxon>Bacilli</taxon>
        <taxon>Bacillales</taxon>
        <taxon>Bacillaceae</taxon>
        <taxon>Bacillus</taxon>
    </lineage>
</organism>
<sequence length="62" mass="6793">MGNDSVKDKMKGGFNKAKGEVKDKVGDMADRTDMQAEGKKDKAKGEIQKDIGKAKDKFSDKD</sequence>
<dbReference type="EMBL" id="Z81356">
    <property type="protein sequence ID" value="CAB03686.1"/>
    <property type="molecule type" value="Genomic_DNA"/>
</dbReference>
<dbReference type="EMBL" id="AL009126">
    <property type="protein sequence ID" value="CAB15684.1"/>
    <property type="molecule type" value="Genomic_DNA"/>
</dbReference>
<dbReference type="PIR" id="C70063">
    <property type="entry name" value="C70063"/>
</dbReference>
<dbReference type="RefSeq" id="NP_391548.1">
    <property type="nucleotide sequence ID" value="NC_000964.3"/>
</dbReference>
<dbReference type="RefSeq" id="WP_003227718.1">
    <property type="nucleotide sequence ID" value="NZ_OZ025638.1"/>
</dbReference>
<dbReference type="SMR" id="P70964"/>
<dbReference type="FunCoup" id="P70964">
    <property type="interactions" value="91"/>
</dbReference>
<dbReference type="STRING" id="224308.BSU36670"/>
<dbReference type="PaxDb" id="224308-BSU36670"/>
<dbReference type="EnsemblBacteria" id="CAB15684">
    <property type="protein sequence ID" value="CAB15684"/>
    <property type="gene ID" value="BSU_36670"/>
</dbReference>
<dbReference type="GeneID" id="936969"/>
<dbReference type="KEGG" id="bsu:BSU36670"/>
<dbReference type="PATRIC" id="fig|224308.179.peg.3970"/>
<dbReference type="eggNOG" id="COG3237">
    <property type="taxonomic scope" value="Bacteria"/>
</dbReference>
<dbReference type="InParanoid" id="P70964"/>
<dbReference type="OrthoDB" id="2914728at2"/>
<dbReference type="BioCyc" id="BSUB:BSU36670-MONOMER"/>
<dbReference type="Proteomes" id="UP000001570">
    <property type="component" value="Chromosome"/>
</dbReference>
<dbReference type="Gene3D" id="1.10.1470.10">
    <property type="entry name" value="YjbJ"/>
    <property type="match status" value="1"/>
</dbReference>
<dbReference type="InterPro" id="IPR008462">
    <property type="entry name" value="CsbD"/>
</dbReference>
<dbReference type="InterPro" id="IPR036629">
    <property type="entry name" value="YjbJ_sf"/>
</dbReference>
<dbReference type="Pfam" id="PF05532">
    <property type="entry name" value="CsbD"/>
    <property type="match status" value="1"/>
</dbReference>
<dbReference type="SUPFAM" id="SSF69047">
    <property type="entry name" value="Hypothetical protein YjbJ"/>
    <property type="match status" value="1"/>
</dbReference>
<accession>P70964</accession>
<evidence type="ECO:0000256" key="1">
    <source>
        <dbReference type="SAM" id="MobiDB-lite"/>
    </source>
</evidence>
<evidence type="ECO:0000269" key="2">
    <source>
    </source>
</evidence>
<evidence type="ECO:0000305" key="3"/>
<feature type="chain" id="PRO_0000209987" description="Stress response protein CsbD">
    <location>
        <begin position="1"/>
        <end position="62"/>
    </location>
</feature>
<feature type="region of interest" description="Disordered" evidence="1">
    <location>
        <begin position="1"/>
        <end position="62"/>
    </location>
</feature>
<name>CSBD_BACSU</name>
<keyword id="KW-1185">Reference proteome</keyword>
<keyword id="KW-0346">Stress response</keyword>